<proteinExistence type="inferred from homology"/>
<keyword id="KW-0963">Cytoplasm</keyword>
<keyword id="KW-0349">Heme</keyword>
<keyword id="KW-0376">Hydrogen peroxide</keyword>
<keyword id="KW-0408">Iron</keyword>
<keyword id="KW-0479">Metal-binding</keyword>
<keyword id="KW-0560">Oxidoreductase</keyword>
<keyword id="KW-0575">Peroxidase</keyword>
<keyword id="KW-1185">Reference proteome</keyword>
<name>CATA_LISMO</name>
<evidence type="ECO:0000250" key="1"/>
<evidence type="ECO:0000255" key="2">
    <source>
        <dbReference type="PROSITE-ProRule" id="PRU10013"/>
    </source>
</evidence>
<evidence type="ECO:0000256" key="3">
    <source>
        <dbReference type="SAM" id="MobiDB-lite"/>
    </source>
</evidence>
<evidence type="ECO:0000305" key="4"/>
<dbReference type="EC" id="1.11.1.6"/>
<dbReference type="EMBL" id="AL591984">
    <property type="protein sequence ID" value="CAD00998.1"/>
    <property type="molecule type" value="Genomic_DNA"/>
</dbReference>
<dbReference type="PIR" id="AH1422">
    <property type="entry name" value="AH1422"/>
</dbReference>
<dbReference type="RefSeq" id="NP_466307.1">
    <property type="nucleotide sequence ID" value="NC_003210.1"/>
</dbReference>
<dbReference type="RefSeq" id="WP_010990069.1">
    <property type="nucleotide sequence ID" value="NZ_CP149495.1"/>
</dbReference>
<dbReference type="SMR" id="Q8Y3P9"/>
<dbReference type="STRING" id="169963.gene:17595502"/>
<dbReference type="PaxDb" id="169963-lmo2785"/>
<dbReference type="EnsemblBacteria" id="CAD00998">
    <property type="protein sequence ID" value="CAD00998"/>
    <property type="gene ID" value="CAD00998"/>
</dbReference>
<dbReference type="GeneID" id="984948"/>
<dbReference type="KEGG" id="lmo:lmo2785"/>
<dbReference type="PATRIC" id="fig|169963.11.peg.2855"/>
<dbReference type="eggNOG" id="COG0753">
    <property type="taxonomic scope" value="Bacteria"/>
</dbReference>
<dbReference type="HOGENOM" id="CLU_010645_4_0_9"/>
<dbReference type="OrthoDB" id="9760293at2"/>
<dbReference type="PhylomeDB" id="Q8Y3P9"/>
<dbReference type="BioCyc" id="LMON169963:LMO2785-MONOMER"/>
<dbReference type="Proteomes" id="UP000000817">
    <property type="component" value="Chromosome"/>
</dbReference>
<dbReference type="GO" id="GO:0005737">
    <property type="term" value="C:cytoplasm"/>
    <property type="evidence" value="ECO:0000318"/>
    <property type="project" value="GO_Central"/>
</dbReference>
<dbReference type="GO" id="GO:0004096">
    <property type="term" value="F:catalase activity"/>
    <property type="evidence" value="ECO:0000318"/>
    <property type="project" value="GO_Central"/>
</dbReference>
<dbReference type="GO" id="GO:0020037">
    <property type="term" value="F:heme binding"/>
    <property type="evidence" value="ECO:0000318"/>
    <property type="project" value="GO_Central"/>
</dbReference>
<dbReference type="GO" id="GO:0046872">
    <property type="term" value="F:metal ion binding"/>
    <property type="evidence" value="ECO:0007669"/>
    <property type="project" value="UniProtKB-KW"/>
</dbReference>
<dbReference type="GO" id="GO:0042744">
    <property type="term" value="P:hydrogen peroxide catabolic process"/>
    <property type="evidence" value="ECO:0000318"/>
    <property type="project" value="GO_Central"/>
</dbReference>
<dbReference type="GO" id="GO:0042542">
    <property type="term" value="P:response to hydrogen peroxide"/>
    <property type="evidence" value="ECO:0000318"/>
    <property type="project" value="GO_Central"/>
</dbReference>
<dbReference type="CDD" id="cd08154">
    <property type="entry name" value="catalase_clade_1"/>
    <property type="match status" value="1"/>
</dbReference>
<dbReference type="FunFam" id="2.40.180.10:FF:000002">
    <property type="entry name" value="Catalase"/>
    <property type="match status" value="1"/>
</dbReference>
<dbReference type="Gene3D" id="2.40.180.10">
    <property type="entry name" value="Catalase core domain"/>
    <property type="match status" value="1"/>
</dbReference>
<dbReference type="InterPro" id="IPR018028">
    <property type="entry name" value="Catalase"/>
</dbReference>
<dbReference type="InterPro" id="IPR024708">
    <property type="entry name" value="Catalase_AS"/>
</dbReference>
<dbReference type="InterPro" id="IPR024711">
    <property type="entry name" value="Catalase_clade1/3"/>
</dbReference>
<dbReference type="InterPro" id="IPR011614">
    <property type="entry name" value="Catalase_core"/>
</dbReference>
<dbReference type="InterPro" id="IPR002226">
    <property type="entry name" value="Catalase_haem_BS"/>
</dbReference>
<dbReference type="InterPro" id="IPR010582">
    <property type="entry name" value="Catalase_immune_responsive"/>
</dbReference>
<dbReference type="InterPro" id="IPR020835">
    <property type="entry name" value="Catalase_sf"/>
</dbReference>
<dbReference type="PANTHER" id="PTHR11465">
    <property type="entry name" value="CATALASE"/>
    <property type="match status" value="1"/>
</dbReference>
<dbReference type="PANTHER" id="PTHR11465:SF23">
    <property type="entry name" value="CATALASE-2"/>
    <property type="match status" value="1"/>
</dbReference>
<dbReference type="Pfam" id="PF00199">
    <property type="entry name" value="Catalase"/>
    <property type="match status" value="1"/>
</dbReference>
<dbReference type="Pfam" id="PF06628">
    <property type="entry name" value="Catalase-rel"/>
    <property type="match status" value="1"/>
</dbReference>
<dbReference type="PIRSF" id="PIRSF038928">
    <property type="entry name" value="Catalase_clade1-3"/>
    <property type="match status" value="1"/>
</dbReference>
<dbReference type="PRINTS" id="PR00067">
    <property type="entry name" value="CATALASE"/>
</dbReference>
<dbReference type="SMART" id="SM01060">
    <property type="entry name" value="Catalase"/>
    <property type="match status" value="1"/>
</dbReference>
<dbReference type="SUPFAM" id="SSF56634">
    <property type="entry name" value="Heme-dependent catalase-like"/>
    <property type="match status" value="1"/>
</dbReference>
<dbReference type="PROSITE" id="PS00437">
    <property type="entry name" value="CATALASE_1"/>
    <property type="match status" value="1"/>
</dbReference>
<dbReference type="PROSITE" id="PS00438">
    <property type="entry name" value="CATALASE_2"/>
    <property type="match status" value="1"/>
</dbReference>
<dbReference type="PROSITE" id="PS51402">
    <property type="entry name" value="CATALASE_3"/>
    <property type="match status" value="1"/>
</dbReference>
<feature type="chain" id="PRO_0000085016" description="Catalase">
    <location>
        <begin position="1"/>
        <end position="488"/>
    </location>
</feature>
<feature type="region of interest" description="Disordered" evidence="3">
    <location>
        <begin position="1"/>
        <end position="26"/>
    </location>
</feature>
<feature type="compositionally biased region" description="Polar residues" evidence="3">
    <location>
        <begin position="7"/>
        <end position="23"/>
    </location>
</feature>
<feature type="active site" evidence="2">
    <location>
        <position position="55"/>
    </location>
</feature>
<feature type="active site" evidence="2">
    <location>
        <position position="128"/>
    </location>
</feature>
<feature type="binding site" description="axial binding residue" evidence="1">
    <location>
        <position position="338"/>
    </location>
    <ligand>
        <name>heme</name>
        <dbReference type="ChEBI" id="CHEBI:30413"/>
    </ligand>
    <ligandPart>
        <name>Fe</name>
        <dbReference type="ChEBI" id="CHEBI:18248"/>
    </ligandPart>
</feature>
<accession>Q8Y3P9</accession>
<gene>
    <name type="primary">kat</name>
    <name type="ordered locus">lmo2785</name>
</gene>
<comment type="function">
    <text>Decomposes hydrogen peroxide into water and oxygen; serves to protect cells from the toxic effects of hydrogen peroxide.</text>
</comment>
<comment type="catalytic activity">
    <reaction evidence="2">
        <text>2 H2O2 = O2 + 2 H2O</text>
        <dbReference type="Rhea" id="RHEA:20309"/>
        <dbReference type="ChEBI" id="CHEBI:15377"/>
        <dbReference type="ChEBI" id="CHEBI:15379"/>
        <dbReference type="ChEBI" id="CHEBI:16240"/>
        <dbReference type="EC" id="1.11.1.6"/>
    </reaction>
</comment>
<comment type="cofactor">
    <cofactor>
        <name>heme</name>
        <dbReference type="ChEBI" id="CHEBI:30413"/>
    </cofactor>
</comment>
<comment type="subcellular location">
    <subcellularLocation>
        <location evidence="4">Cytoplasm</location>
    </subcellularLocation>
</comment>
<comment type="similarity">
    <text evidence="4">Belongs to the catalase family.</text>
</comment>
<organism>
    <name type="scientific">Listeria monocytogenes serovar 1/2a (strain ATCC BAA-679 / EGD-e)</name>
    <dbReference type="NCBI Taxonomy" id="169963"/>
    <lineage>
        <taxon>Bacteria</taxon>
        <taxon>Bacillati</taxon>
        <taxon>Bacillota</taxon>
        <taxon>Bacilli</taxon>
        <taxon>Bacillales</taxon>
        <taxon>Listeriaceae</taxon>
        <taxon>Listeria</taxon>
    </lineage>
</organism>
<sequence length="488" mass="55888">MTDRKNLTTNQGVPVGDNQNSMTAGRKGPTLIEDYVLIEKLAHFDRERVPERVVHARGAGAHGKFVTKKSMKKYTMAKFLQEEGTETEVFARFSTVIHGQHSPETLRDPRGFSVKFYTEEGNYDFVGNNLPVFFIRDAIKFPDVIHSLKPDPRTNIQDGNRYWDFFSLTPEATTMIMYLFSDEGTPASYREVRGSSVHAFKWINEEGKTVYVKLRWVPKAGIVNLSTEQASQIQAKEFNHASRDLYEAIENGDYPEWDLYVQVLDPKDLDSFDFNPLDATKDWFEDVFPYEHVGTMTLDRNPDNIFAETESVGFNPGVLVRGMLPSEDRLLQGRLFSYSDTQRHRVGPNYLQLPINSPKAPVANNQRDGHMPFKQQTSSINYEPNSYDTEPKENPAFIEPEQEIRGDISGRLIAEKPNNFGHAKEVWDRYSNAERAALVKNIVDDWSQVREDIKIRNLRNFYQVDPEFASRVAAGTGINLEEHVTDLK</sequence>
<protein>
    <recommendedName>
        <fullName>Catalase</fullName>
        <ecNumber>1.11.1.6</ecNumber>
    </recommendedName>
</protein>
<reference key="1">
    <citation type="journal article" date="2001" name="Science">
        <title>Comparative genomics of Listeria species.</title>
        <authorList>
            <person name="Glaser P."/>
            <person name="Frangeul L."/>
            <person name="Buchrieser C."/>
            <person name="Rusniok C."/>
            <person name="Amend A."/>
            <person name="Baquero F."/>
            <person name="Berche P."/>
            <person name="Bloecker H."/>
            <person name="Brandt P."/>
            <person name="Chakraborty T."/>
            <person name="Charbit A."/>
            <person name="Chetouani F."/>
            <person name="Couve E."/>
            <person name="de Daruvar A."/>
            <person name="Dehoux P."/>
            <person name="Domann E."/>
            <person name="Dominguez-Bernal G."/>
            <person name="Duchaud E."/>
            <person name="Durant L."/>
            <person name="Dussurget O."/>
            <person name="Entian K.-D."/>
            <person name="Fsihi H."/>
            <person name="Garcia-del Portillo F."/>
            <person name="Garrido P."/>
            <person name="Gautier L."/>
            <person name="Goebel W."/>
            <person name="Gomez-Lopez N."/>
            <person name="Hain T."/>
            <person name="Hauf J."/>
            <person name="Jackson D."/>
            <person name="Jones L.-M."/>
            <person name="Kaerst U."/>
            <person name="Kreft J."/>
            <person name="Kuhn M."/>
            <person name="Kunst F."/>
            <person name="Kurapkat G."/>
            <person name="Madueno E."/>
            <person name="Maitournam A."/>
            <person name="Mata Vicente J."/>
            <person name="Ng E."/>
            <person name="Nedjari H."/>
            <person name="Nordsiek G."/>
            <person name="Novella S."/>
            <person name="de Pablos B."/>
            <person name="Perez-Diaz J.-C."/>
            <person name="Purcell R."/>
            <person name="Remmel B."/>
            <person name="Rose M."/>
            <person name="Schlueter T."/>
            <person name="Simoes N."/>
            <person name="Tierrez A."/>
            <person name="Vazquez-Boland J.-A."/>
            <person name="Voss H."/>
            <person name="Wehland J."/>
            <person name="Cossart P."/>
        </authorList>
    </citation>
    <scope>NUCLEOTIDE SEQUENCE [LARGE SCALE GENOMIC DNA]</scope>
    <source>
        <strain>ATCC BAA-679 / EGD-e</strain>
    </source>
</reference>